<feature type="chain" id="PRO_0000088379" description="UPF0053 protein MG146 homolog">
    <location>
        <begin position="1"/>
        <end position="424"/>
    </location>
</feature>
<feature type="transmembrane region" description="Helical" evidence="1">
    <location>
        <begin position="7"/>
        <end position="27"/>
    </location>
</feature>
<feature type="transmembrane region" description="Helical" evidence="1">
    <location>
        <begin position="71"/>
        <end position="91"/>
    </location>
</feature>
<feature type="transmembrane region" description="Helical" evidence="1">
    <location>
        <begin position="101"/>
        <end position="121"/>
    </location>
</feature>
<feature type="transmembrane region" description="Helical" evidence="1">
    <location>
        <begin position="135"/>
        <end position="155"/>
    </location>
</feature>
<feature type="domain" description="CNNM transmembrane" evidence="3">
    <location>
        <begin position="6"/>
        <end position="191"/>
    </location>
</feature>
<feature type="domain" description="CBS 1" evidence="2">
    <location>
        <begin position="210"/>
        <end position="270"/>
    </location>
</feature>
<feature type="domain" description="CBS 2" evidence="2">
    <location>
        <begin position="275"/>
        <end position="335"/>
    </location>
</feature>
<organism>
    <name type="scientific">Mycoplasma pneumoniae (strain ATCC 29342 / M129 / Subtype 1)</name>
    <name type="common">Mycoplasmoides pneumoniae</name>
    <dbReference type="NCBI Taxonomy" id="272634"/>
    <lineage>
        <taxon>Bacteria</taxon>
        <taxon>Bacillati</taxon>
        <taxon>Mycoplasmatota</taxon>
        <taxon>Mycoplasmoidales</taxon>
        <taxon>Mycoplasmoidaceae</taxon>
        <taxon>Mycoplasmoides</taxon>
    </lineage>
</organism>
<reference key="1">
    <citation type="journal article" date="1996" name="Nucleic Acids Res.">
        <title>Complete sequence analysis of the genome of the bacterium Mycoplasma pneumoniae.</title>
        <authorList>
            <person name="Himmelreich R."/>
            <person name="Hilbert H."/>
            <person name="Plagens H."/>
            <person name="Pirkl E."/>
            <person name="Li B.-C."/>
            <person name="Herrmann R."/>
        </authorList>
    </citation>
    <scope>NUCLEOTIDE SEQUENCE [LARGE SCALE GENOMIC DNA]</scope>
    <source>
        <strain>ATCC 29342 / M129 / Subtype 1</strain>
    </source>
</reference>
<sequence>MESAPSGGLLALIIISIILLACISAVVSAYETAITSITSYKWSNYVKTHNKQKKLTTKIVNHFQKNYSACLITILVANNIVAILVSNILFLALDQSIKNPAISSALNLLISGVLLLMLCEITPKTLARINIIRVLVYFAVVVYFFYILFWPITKLASIIFAKYEKAPPVSRRDVYFFIDEIEQNGLFTKEDGQLIKRTLIFDQVLVDQIMIKWNRVVYCYEGDPVKTIKEKFLHGQFSRMPVLDQTSNEVVGFIHLKDLFSSLEKSNEPFVLQELLYPAVLVSNTTPIKQALRQMRLHRAHLAVVQDKHHHTIGIVSMEDIIEELVGEIYDEHDEVEAVQTLDNNTWLVLPNVKAAFFFNKWIKRDLVKSKNMTIQRYLASFENDGLNTQNKLETPWFIAEAIVDSENPEQIRYEIRKKSDVVD</sequence>
<keyword id="KW-0129">CBS domain</keyword>
<keyword id="KW-1003">Cell membrane</keyword>
<keyword id="KW-0472">Membrane</keyword>
<keyword id="KW-1185">Reference proteome</keyword>
<keyword id="KW-0677">Repeat</keyword>
<keyword id="KW-0812">Transmembrane</keyword>
<keyword id="KW-1133">Transmembrane helix</keyword>
<evidence type="ECO:0000255" key="1"/>
<evidence type="ECO:0000255" key="2">
    <source>
        <dbReference type="PROSITE-ProRule" id="PRU00703"/>
    </source>
</evidence>
<evidence type="ECO:0000255" key="3">
    <source>
        <dbReference type="PROSITE-ProRule" id="PRU01193"/>
    </source>
</evidence>
<evidence type="ECO:0000305" key="4"/>
<gene>
    <name type="ordered locus">MPN_159</name>
    <name type="ORF">MP672</name>
    <name type="ORF">VXpSPT7_orf424</name>
</gene>
<comment type="subcellular location">
    <subcellularLocation>
        <location evidence="4">Cell membrane</location>
        <topology evidence="4">Multi-pass membrane protein</topology>
    </subcellularLocation>
</comment>
<comment type="similarity">
    <text evidence="4">Belongs to the UPF0053 family.</text>
</comment>
<dbReference type="EMBL" id="U00089">
    <property type="protein sequence ID" value="AAB96320.1"/>
    <property type="molecule type" value="Genomic_DNA"/>
</dbReference>
<dbReference type="PIR" id="S73998">
    <property type="entry name" value="S73998"/>
</dbReference>
<dbReference type="RefSeq" id="NP_109847.1">
    <property type="nucleotide sequence ID" value="NC_000912.1"/>
</dbReference>
<dbReference type="RefSeq" id="WP_010874516.1">
    <property type="nucleotide sequence ID" value="NZ_OU342337.1"/>
</dbReference>
<dbReference type="SMR" id="P75586"/>
<dbReference type="STRING" id="272634.MPN_159"/>
<dbReference type="EnsemblBacteria" id="AAB96320">
    <property type="protein sequence ID" value="AAB96320"/>
    <property type="gene ID" value="MPN_159"/>
</dbReference>
<dbReference type="KEGG" id="mpn:MPN_159"/>
<dbReference type="PATRIC" id="fig|272634.6.peg.177"/>
<dbReference type="HOGENOM" id="CLU_015237_4_1_14"/>
<dbReference type="OrthoDB" id="9798188at2"/>
<dbReference type="BioCyc" id="MPNE272634:G1GJ3-266-MONOMER"/>
<dbReference type="Proteomes" id="UP000000808">
    <property type="component" value="Chromosome"/>
</dbReference>
<dbReference type="GO" id="GO:0005886">
    <property type="term" value="C:plasma membrane"/>
    <property type="evidence" value="ECO:0007669"/>
    <property type="project" value="UniProtKB-SubCell"/>
</dbReference>
<dbReference type="CDD" id="cd04590">
    <property type="entry name" value="CBS_pair_CorC_HlyC_assoc"/>
    <property type="match status" value="1"/>
</dbReference>
<dbReference type="Gene3D" id="3.10.580.10">
    <property type="entry name" value="CBS-domain"/>
    <property type="match status" value="1"/>
</dbReference>
<dbReference type="InterPro" id="IPR000644">
    <property type="entry name" value="CBS_dom"/>
</dbReference>
<dbReference type="InterPro" id="IPR046342">
    <property type="entry name" value="CBS_dom_sf"/>
</dbReference>
<dbReference type="InterPro" id="IPR002550">
    <property type="entry name" value="CNNM"/>
</dbReference>
<dbReference type="InterPro" id="IPR044751">
    <property type="entry name" value="Ion_transp-like_CBS"/>
</dbReference>
<dbReference type="PANTHER" id="PTHR22777">
    <property type="entry name" value="HEMOLYSIN-RELATED"/>
    <property type="match status" value="1"/>
</dbReference>
<dbReference type="PANTHER" id="PTHR22777:SF17">
    <property type="entry name" value="UPF0053 PROTEIN SLL0260"/>
    <property type="match status" value="1"/>
</dbReference>
<dbReference type="Pfam" id="PF00571">
    <property type="entry name" value="CBS"/>
    <property type="match status" value="2"/>
</dbReference>
<dbReference type="Pfam" id="PF01595">
    <property type="entry name" value="CNNM"/>
    <property type="match status" value="1"/>
</dbReference>
<dbReference type="SMART" id="SM00116">
    <property type="entry name" value="CBS"/>
    <property type="match status" value="2"/>
</dbReference>
<dbReference type="SUPFAM" id="SSF54631">
    <property type="entry name" value="CBS-domain pair"/>
    <property type="match status" value="1"/>
</dbReference>
<dbReference type="PROSITE" id="PS51371">
    <property type="entry name" value="CBS"/>
    <property type="match status" value="2"/>
</dbReference>
<dbReference type="PROSITE" id="PS51846">
    <property type="entry name" value="CNNM"/>
    <property type="match status" value="1"/>
</dbReference>
<accession>P75586</accession>
<name>Y159_MYCPN</name>
<protein>
    <recommendedName>
        <fullName>UPF0053 protein MG146 homolog</fullName>
    </recommendedName>
</protein>
<proteinExistence type="inferred from homology"/>